<protein>
    <recommendedName>
        <fullName evidence="1">Thiamine-phosphate synthase</fullName>
        <shortName evidence="1">TP synthase</shortName>
        <shortName evidence="1">TPS</shortName>
        <ecNumber evidence="1">2.5.1.3</ecNumber>
    </recommendedName>
    <alternativeName>
        <fullName evidence="1">Thiamine-phosphate pyrophosphorylase</fullName>
        <shortName evidence="1">TMP pyrophosphorylase</shortName>
        <shortName evidence="1">TMP-PPase</shortName>
    </alternativeName>
</protein>
<sequence length="206" mass="22529">MLGRLYLVVTPRPGWSLEATLDRTERALAGGVEVVQLRAKDWEARPTLALGERMLALARRYGVPFFLNDRPDLAALLGADGVHLGQNDLTPEEARRFFAGMVGRSTHAPEQALRALEEGVDYLSVGPVWETPTKPGRPAAGLAYVRWAAENLGEKPWYAIGGIDLGNLDQVLEAGARRIVVVRAILDAPDPERAARALRERLYGVA</sequence>
<reference key="1">
    <citation type="journal article" date="2004" name="Nat. Biotechnol.">
        <title>The genome sequence of the extreme thermophile Thermus thermophilus.</title>
        <authorList>
            <person name="Henne A."/>
            <person name="Brueggemann H."/>
            <person name="Raasch C."/>
            <person name="Wiezer A."/>
            <person name="Hartsch T."/>
            <person name="Liesegang H."/>
            <person name="Johann A."/>
            <person name="Lienard T."/>
            <person name="Gohl O."/>
            <person name="Martinez-Arias R."/>
            <person name="Jacobi C."/>
            <person name="Starkuviene V."/>
            <person name="Schlenczeck S."/>
            <person name="Dencker S."/>
            <person name="Huber R."/>
            <person name="Klenk H.-P."/>
            <person name="Kramer W."/>
            <person name="Merkl R."/>
            <person name="Gottschalk G."/>
            <person name="Fritz H.-J."/>
        </authorList>
    </citation>
    <scope>NUCLEOTIDE SEQUENCE [LARGE SCALE GENOMIC DNA]</scope>
    <source>
        <strain>ATCC BAA-163 / DSM 7039 / HB27</strain>
    </source>
</reference>
<proteinExistence type="inferred from homology"/>
<dbReference type="EC" id="2.5.1.3" evidence="1"/>
<dbReference type="EMBL" id="AE017221">
    <property type="protein sequence ID" value="AAS80663.1"/>
    <property type="molecule type" value="Genomic_DNA"/>
</dbReference>
<dbReference type="RefSeq" id="WP_011172766.1">
    <property type="nucleotide sequence ID" value="NC_005835.1"/>
</dbReference>
<dbReference type="SMR" id="Q72KL8"/>
<dbReference type="GeneID" id="3169730"/>
<dbReference type="KEGG" id="tth:TT_C0315"/>
<dbReference type="eggNOG" id="COG0352">
    <property type="taxonomic scope" value="Bacteria"/>
</dbReference>
<dbReference type="HOGENOM" id="CLU_018272_3_0_0"/>
<dbReference type="OrthoDB" id="9812206at2"/>
<dbReference type="UniPathway" id="UPA00060">
    <property type="reaction ID" value="UER00141"/>
</dbReference>
<dbReference type="Proteomes" id="UP000000592">
    <property type="component" value="Chromosome"/>
</dbReference>
<dbReference type="GO" id="GO:0005737">
    <property type="term" value="C:cytoplasm"/>
    <property type="evidence" value="ECO:0007669"/>
    <property type="project" value="TreeGrafter"/>
</dbReference>
<dbReference type="GO" id="GO:0000287">
    <property type="term" value="F:magnesium ion binding"/>
    <property type="evidence" value="ECO:0007669"/>
    <property type="project" value="UniProtKB-UniRule"/>
</dbReference>
<dbReference type="GO" id="GO:0004789">
    <property type="term" value="F:thiamine-phosphate diphosphorylase activity"/>
    <property type="evidence" value="ECO:0007669"/>
    <property type="project" value="UniProtKB-UniRule"/>
</dbReference>
<dbReference type="GO" id="GO:0009228">
    <property type="term" value="P:thiamine biosynthetic process"/>
    <property type="evidence" value="ECO:0007669"/>
    <property type="project" value="UniProtKB-KW"/>
</dbReference>
<dbReference type="GO" id="GO:0009229">
    <property type="term" value="P:thiamine diphosphate biosynthetic process"/>
    <property type="evidence" value="ECO:0007669"/>
    <property type="project" value="UniProtKB-UniRule"/>
</dbReference>
<dbReference type="CDD" id="cd00564">
    <property type="entry name" value="TMP_TenI"/>
    <property type="match status" value="1"/>
</dbReference>
<dbReference type="Gene3D" id="3.20.20.70">
    <property type="entry name" value="Aldolase class I"/>
    <property type="match status" value="1"/>
</dbReference>
<dbReference type="HAMAP" id="MF_00097">
    <property type="entry name" value="TMP_synthase"/>
    <property type="match status" value="1"/>
</dbReference>
<dbReference type="InterPro" id="IPR013785">
    <property type="entry name" value="Aldolase_TIM"/>
</dbReference>
<dbReference type="InterPro" id="IPR036206">
    <property type="entry name" value="ThiamineP_synth_sf"/>
</dbReference>
<dbReference type="InterPro" id="IPR022998">
    <property type="entry name" value="ThiamineP_synth_TenI"/>
</dbReference>
<dbReference type="InterPro" id="IPR034291">
    <property type="entry name" value="TMP_synthase"/>
</dbReference>
<dbReference type="NCBIfam" id="TIGR00693">
    <property type="entry name" value="thiE"/>
    <property type="match status" value="1"/>
</dbReference>
<dbReference type="PANTHER" id="PTHR20857">
    <property type="entry name" value="THIAMINE-PHOSPHATE PYROPHOSPHORYLASE"/>
    <property type="match status" value="1"/>
</dbReference>
<dbReference type="PANTHER" id="PTHR20857:SF15">
    <property type="entry name" value="THIAMINE-PHOSPHATE SYNTHASE"/>
    <property type="match status" value="1"/>
</dbReference>
<dbReference type="Pfam" id="PF02581">
    <property type="entry name" value="TMP-TENI"/>
    <property type="match status" value="1"/>
</dbReference>
<dbReference type="SUPFAM" id="SSF51391">
    <property type="entry name" value="Thiamin phosphate synthase"/>
    <property type="match status" value="1"/>
</dbReference>
<keyword id="KW-0460">Magnesium</keyword>
<keyword id="KW-0479">Metal-binding</keyword>
<keyword id="KW-0784">Thiamine biosynthesis</keyword>
<keyword id="KW-0808">Transferase</keyword>
<name>THIE_THET2</name>
<comment type="function">
    <text evidence="1">Condenses 4-methyl-5-(beta-hydroxyethyl)thiazole monophosphate (THZ-P) and 2-methyl-4-amino-5-hydroxymethyl pyrimidine pyrophosphate (HMP-PP) to form thiamine monophosphate (TMP).</text>
</comment>
<comment type="catalytic activity">
    <reaction evidence="1">
        <text>2-[(2R,5Z)-2-carboxy-4-methylthiazol-5(2H)-ylidene]ethyl phosphate + 4-amino-2-methyl-5-(diphosphooxymethyl)pyrimidine + 2 H(+) = thiamine phosphate + CO2 + diphosphate</text>
        <dbReference type="Rhea" id="RHEA:47844"/>
        <dbReference type="ChEBI" id="CHEBI:15378"/>
        <dbReference type="ChEBI" id="CHEBI:16526"/>
        <dbReference type="ChEBI" id="CHEBI:33019"/>
        <dbReference type="ChEBI" id="CHEBI:37575"/>
        <dbReference type="ChEBI" id="CHEBI:57841"/>
        <dbReference type="ChEBI" id="CHEBI:62899"/>
        <dbReference type="EC" id="2.5.1.3"/>
    </reaction>
</comment>
<comment type="catalytic activity">
    <reaction evidence="1">
        <text>2-(2-carboxy-4-methylthiazol-5-yl)ethyl phosphate + 4-amino-2-methyl-5-(diphosphooxymethyl)pyrimidine + 2 H(+) = thiamine phosphate + CO2 + diphosphate</text>
        <dbReference type="Rhea" id="RHEA:47848"/>
        <dbReference type="ChEBI" id="CHEBI:15378"/>
        <dbReference type="ChEBI" id="CHEBI:16526"/>
        <dbReference type="ChEBI" id="CHEBI:33019"/>
        <dbReference type="ChEBI" id="CHEBI:37575"/>
        <dbReference type="ChEBI" id="CHEBI:57841"/>
        <dbReference type="ChEBI" id="CHEBI:62890"/>
        <dbReference type="EC" id="2.5.1.3"/>
    </reaction>
</comment>
<comment type="catalytic activity">
    <reaction evidence="1">
        <text>4-methyl-5-(2-phosphooxyethyl)-thiazole + 4-amino-2-methyl-5-(diphosphooxymethyl)pyrimidine + H(+) = thiamine phosphate + diphosphate</text>
        <dbReference type="Rhea" id="RHEA:22328"/>
        <dbReference type="ChEBI" id="CHEBI:15378"/>
        <dbReference type="ChEBI" id="CHEBI:33019"/>
        <dbReference type="ChEBI" id="CHEBI:37575"/>
        <dbReference type="ChEBI" id="CHEBI:57841"/>
        <dbReference type="ChEBI" id="CHEBI:58296"/>
        <dbReference type="EC" id="2.5.1.3"/>
    </reaction>
</comment>
<comment type="cofactor">
    <cofactor evidence="1">
        <name>Mg(2+)</name>
        <dbReference type="ChEBI" id="CHEBI:18420"/>
    </cofactor>
    <text evidence="1">Binds 1 Mg(2+) ion per subunit.</text>
</comment>
<comment type="pathway">
    <text evidence="1">Cofactor biosynthesis; thiamine diphosphate biosynthesis; thiamine phosphate from 4-amino-2-methyl-5-diphosphomethylpyrimidine and 4-methyl-5-(2-phosphoethyl)-thiazole: step 1/1.</text>
</comment>
<comment type="similarity">
    <text evidence="1">Belongs to the thiamine-phosphate synthase family.</text>
</comment>
<organism>
    <name type="scientific">Thermus thermophilus (strain ATCC BAA-163 / DSM 7039 / HB27)</name>
    <dbReference type="NCBI Taxonomy" id="262724"/>
    <lineage>
        <taxon>Bacteria</taxon>
        <taxon>Thermotogati</taxon>
        <taxon>Deinococcota</taxon>
        <taxon>Deinococci</taxon>
        <taxon>Thermales</taxon>
        <taxon>Thermaceae</taxon>
        <taxon>Thermus</taxon>
    </lineage>
</organism>
<accession>Q72KL8</accession>
<feature type="chain" id="PRO_1000008182" description="Thiamine-phosphate synthase">
    <location>
        <begin position="1"/>
        <end position="206"/>
    </location>
</feature>
<feature type="binding site" evidence="1">
    <location>
        <begin position="36"/>
        <end position="40"/>
    </location>
    <ligand>
        <name>4-amino-2-methyl-5-(diphosphooxymethyl)pyrimidine</name>
        <dbReference type="ChEBI" id="CHEBI:57841"/>
    </ligand>
</feature>
<feature type="binding site" evidence="1">
    <location>
        <position position="68"/>
    </location>
    <ligand>
        <name>4-amino-2-methyl-5-(diphosphooxymethyl)pyrimidine</name>
        <dbReference type="ChEBI" id="CHEBI:57841"/>
    </ligand>
</feature>
<feature type="binding site" evidence="1">
    <location>
        <position position="69"/>
    </location>
    <ligand>
        <name>Mg(2+)</name>
        <dbReference type="ChEBI" id="CHEBI:18420"/>
    </ligand>
</feature>
<feature type="binding site" evidence="1">
    <location>
        <position position="88"/>
    </location>
    <ligand>
        <name>Mg(2+)</name>
        <dbReference type="ChEBI" id="CHEBI:18420"/>
    </ligand>
</feature>
<feature type="binding site" evidence="1">
    <location>
        <position position="105"/>
    </location>
    <ligand>
        <name>4-amino-2-methyl-5-(diphosphooxymethyl)pyrimidine</name>
        <dbReference type="ChEBI" id="CHEBI:57841"/>
    </ligand>
</feature>
<feature type="binding site" evidence="1">
    <location>
        <begin position="131"/>
        <end position="133"/>
    </location>
    <ligand>
        <name>2-[(2R,5Z)-2-carboxy-4-methylthiazol-5(2H)-ylidene]ethyl phosphate</name>
        <dbReference type="ChEBI" id="CHEBI:62899"/>
    </ligand>
</feature>
<feature type="binding site" evidence="1">
    <location>
        <position position="134"/>
    </location>
    <ligand>
        <name>4-amino-2-methyl-5-(diphosphooxymethyl)pyrimidine</name>
        <dbReference type="ChEBI" id="CHEBI:57841"/>
    </ligand>
</feature>
<feature type="binding site" evidence="1">
    <location>
        <position position="162"/>
    </location>
    <ligand>
        <name>2-[(2R,5Z)-2-carboxy-4-methylthiazol-5(2H)-ylidene]ethyl phosphate</name>
        <dbReference type="ChEBI" id="CHEBI:62899"/>
    </ligand>
</feature>
<gene>
    <name evidence="1" type="primary">thiE</name>
    <name type="ordered locus">TT_C0315</name>
</gene>
<evidence type="ECO:0000255" key="1">
    <source>
        <dbReference type="HAMAP-Rule" id="MF_00097"/>
    </source>
</evidence>